<keyword id="KW-0007">Acetylation</keyword>
<keyword id="KW-0024">Alternative initiation</keyword>
<keyword id="KW-0898">Cataract</keyword>
<keyword id="KW-0903">Direct protein sequencing</keyword>
<keyword id="KW-0225">Disease variant</keyword>
<keyword id="KW-0273">Eye lens protein</keyword>
<keyword id="KW-0318">Glutathionylation</keyword>
<keyword id="KW-0488">Methylation</keyword>
<keyword id="KW-0558">Oxidation</keyword>
<keyword id="KW-1267">Proteomics identification</keyword>
<keyword id="KW-1185">Reference proteome</keyword>
<keyword id="KW-0677">Repeat</keyword>
<organism>
    <name type="scientific">Homo sapiens</name>
    <name type="common">Human</name>
    <dbReference type="NCBI Taxonomy" id="9606"/>
    <lineage>
        <taxon>Eukaryota</taxon>
        <taxon>Metazoa</taxon>
        <taxon>Chordata</taxon>
        <taxon>Craniata</taxon>
        <taxon>Vertebrata</taxon>
        <taxon>Euteleostomi</taxon>
        <taxon>Mammalia</taxon>
        <taxon>Eutheria</taxon>
        <taxon>Euarchontoglires</taxon>
        <taxon>Primates</taxon>
        <taxon>Haplorrhini</taxon>
        <taxon>Catarrhini</taxon>
        <taxon>Hominidae</taxon>
        <taxon>Homo</taxon>
    </lineage>
</organism>
<protein>
    <recommendedName>
        <fullName evidence="11">Beta-crystallin A3</fullName>
    </recommendedName>
    <component>
        <recommendedName>
            <fullName>Beta-crystallin A3, isoform A1, Delta4 form</fullName>
        </recommendedName>
    </component>
    <component>
        <recommendedName>
            <fullName>Beta-crystallin A3, isoform A1, Delta7 form</fullName>
        </recommendedName>
    </component>
    <component>
        <recommendedName>
            <fullName>Beta-crystallin A3, isoform A1, Delta8 form</fullName>
        </recommendedName>
    </component>
</protein>
<sequence>METQAEQQELETLPTTKMAQTNPTPGSLGPWKITIYDQENFQGKRMEFTSSCPNVSERSFDNVRSLKVESGAWIGYEHTSFCGQQFILERGEYPRWDAWSGSNAYHIERLMSFRPICSANHKESKMTIFEKENFIGRQWEISDDYPSLQAMGWFNNEVGSMKIQSGAWVCYQYPGYRGYQYILECDHHGGDYKHWREWGSHAQTSQIQSIRRIQQ</sequence>
<feature type="chain" id="PRO_0000006331" description="Beta-crystallin A3">
    <location>
        <begin position="1"/>
        <end position="215"/>
    </location>
</feature>
<feature type="chain" id="PRO_0000226692" description="Beta-crystallin A3, isoform A1, Delta4 form">
    <location>
        <begin position="23"/>
        <end position="215"/>
    </location>
</feature>
<feature type="chain" id="PRO_0000226693" description="Beta-crystallin A3, isoform A1, Delta7 form">
    <location>
        <begin position="26"/>
        <end position="215"/>
    </location>
</feature>
<feature type="chain" id="PRO_0000226694" description="Beta-crystallin A3, isoform A1, Delta8 form">
    <location>
        <begin position="27"/>
        <end position="215"/>
    </location>
</feature>
<feature type="domain" description="Beta/gamma crystallin 'Greek key' 1" evidence="2">
    <location>
        <begin position="31"/>
        <end position="70"/>
    </location>
</feature>
<feature type="domain" description="Beta/gamma crystallin 'Greek key' 2" evidence="2">
    <location>
        <begin position="71"/>
        <end position="117"/>
    </location>
</feature>
<feature type="domain" description="Beta/gamma crystallin 'Greek key' 3" evidence="2">
    <location>
        <begin position="124"/>
        <end position="165"/>
    </location>
</feature>
<feature type="domain" description="Beta/gamma crystallin 'Greek key' 4" evidence="2">
    <location>
        <begin position="166"/>
        <end position="214"/>
    </location>
</feature>
<feature type="region of interest" description="N-terminal arm">
    <location>
        <begin position="1"/>
        <end position="30"/>
    </location>
</feature>
<feature type="region of interest" description="Disordered" evidence="3">
    <location>
        <begin position="1"/>
        <end position="29"/>
    </location>
</feature>
<feature type="region of interest" description="Connecting peptide">
    <location>
        <begin position="118"/>
        <end position="123"/>
    </location>
</feature>
<feature type="compositionally biased region" description="Low complexity" evidence="3">
    <location>
        <begin position="1"/>
        <end position="16"/>
    </location>
</feature>
<feature type="modified residue" description="N-acetylmethionine" evidence="5 9">
    <location>
        <position position="1"/>
    </location>
</feature>
<feature type="modified residue" description="S-glutathionyl cysteine; alternate" evidence="5">
    <location>
        <position position="82"/>
    </location>
</feature>
<feature type="modified residue" description="S-methylcysteine; alternate" evidence="5">
    <location>
        <position position="82"/>
    </location>
</feature>
<feature type="modified residue" description="S-glutathionyl cysteine; alternate" evidence="5">
    <location>
        <position position="117"/>
    </location>
</feature>
<feature type="modified residue" description="S-methylcysteine; alternate" evidence="5">
    <location>
        <position position="117"/>
    </location>
</feature>
<feature type="modified residue" description="S-methylcysteine" evidence="5">
    <location>
        <position position="185"/>
    </location>
</feature>
<feature type="splice variant" id="VSP_018710" description="In isoform A1." evidence="11">
    <location>
        <begin position="1"/>
        <end position="17"/>
    </location>
</feature>
<feature type="sequence variant" id="VAR_084782" description="In CTRCT10." evidence="6 8">
    <location>
        <position position="91"/>
    </location>
</feature>
<feature type="sequence conflict" description="In Ref. 1; AAA52107." evidence="11" ref="1">
    <original>I</original>
    <variation>M</variation>
    <location>
        <position position="107"/>
    </location>
</feature>
<feature type="sequence conflict" description="In Ref. 1; AAA52107." evidence="11" ref="1">
    <original>I</original>
    <variation>F</variation>
    <location>
        <position position="116"/>
    </location>
</feature>
<feature type="sequence conflict" description="In Ref. 1; AAA52107." evidence="11" ref="1">
    <original>QYP</original>
    <variation>HYL</variation>
    <location>
        <begin position="172"/>
        <end position="174"/>
    </location>
</feature>
<feature type="sequence conflict" description="In Ref. 1; AAA52107." evidence="11" ref="1">
    <original>E</original>
    <variation>K</variation>
    <location>
        <position position="184"/>
    </location>
</feature>
<feature type="sequence conflict" description="In Ref. 1; AAA52107." evidence="11" ref="1">
    <original>G</original>
    <variation>E</variation>
    <location>
        <position position="189"/>
    </location>
</feature>
<feature type="initiator methionine" description="Removed" evidence="5 9">
    <location sequence="P05813-2">
        <position position="1"/>
    </location>
</feature>
<feature type="modified residue" description="N-acetylalanine" evidence="5 9">
    <location sequence="P05813-2">
        <position position="2"/>
    </location>
</feature>
<comment type="function">
    <text>Crystallins are the dominant structural components of the vertebrate eye lens.</text>
</comment>
<comment type="subunit">
    <text evidence="1 7">Homo/heterodimer, or complexes of higher-order. The structure of beta-crystallin oligomers seems to be stabilized through interactions between the N-terminal arms (By similarity). Interacts with CRYBA1 (PubMed:28083894).</text>
</comment>
<comment type="interaction">
    <interactant intactId="EBI-7043337">
        <id>P05813</id>
    </interactant>
    <interactant intactId="EBI-948603">
        <id>Q03989</id>
        <label>ARID5A</label>
    </interactant>
    <organismsDiffer>false</organismsDiffer>
    <experiments>3</experiments>
</comment>
<comment type="interaction">
    <interactant intactId="EBI-7043337">
        <id>P05813</id>
    </interactant>
    <interactant intactId="EBI-11977289">
        <id>Q9H503-2</id>
        <label>BANF2</label>
    </interactant>
    <organismsDiffer>false</organismsDiffer>
    <experiments>3</experiments>
</comment>
<comment type="interaction">
    <interactant intactId="EBI-7043337">
        <id>P05813</id>
    </interactant>
    <interactant intactId="EBI-12832044">
        <id>Q96J87-2</id>
        <label>CELF6</label>
    </interactant>
    <organismsDiffer>false</organismsDiffer>
    <experiments>3</experiments>
</comment>
<comment type="interaction">
    <interactant intactId="EBI-7043337">
        <id>P05813</id>
    </interactant>
    <interactant intactId="EBI-10274247">
        <id>Q8TCT0</id>
        <label>CERK</label>
    </interactant>
    <organismsDiffer>false</organismsDiffer>
    <experiments>3</experiments>
</comment>
<comment type="interaction">
    <interactant intactId="EBI-7043337">
        <id>P05813</id>
    </interactant>
    <interactant intactId="EBI-2321769">
        <id>Q9Y6H1</id>
        <label>CHCHD2</label>
    </interactant>
    <organismsDiffer>false</organismsDiffer>
    <experiments>3</experiments>
</comment>
<comment type="interaction">
    <interactant intactId="EBI-7043337">
        <id>P05813</id>
    </interactant>
    <interactant intactId="EBI-739060">
        <id>P02511</id>
        <label>CRYAB</label>
    </interactant>
    <organismsDiffer>false</organismsDiffer>
    <experiments>2</experiments>
</comment>
<comment type="interaction">
    <interactant intactId="EBI-7043337">
        <id>P05813</id>
    </interactant>
    <interactant intactId="EBI-7519424">
        <id>P53674</id>
        <label>CRYBB1</label>
    </interactant>
    <organismsDiffer>false</organismsDiffer>
    <experiments>9</experiments>
</comment>
<comment type="interaction">
    <interactant intactId="EBI-7043337">
        <id>P05813</id>
    </interactant>
    <interactant intactId="EBI-974082">
        <id>P43320</id>
        <label>CRYBB2</label>
    </interactant>
    <organismsDiffer>false</organismsDiffer>
    <experiments>3</experiments>
</comment>
<comment type="interaction">
    <interactant intactId="EBI-7043337">
        <id>P05813</id>
    </interactant>
    <interactant intactId="EBI-1965681">
        <id>P26998</id>
        <label>CRYBB3</label>
    </interactant>
    <organismsDiffer>false</organismsDiffer>
    <experiments>6</experiments>
</comment>
<comment type="interaction">
    <interactant intactId="EBI-7043337">
        <id>P05813</id>
    </interactant>
    <interactant intactId="EBI-3867333">
        <id>A8MQ03</id>
        <label>CYSRT1</label>
    </interactant>
    <organismsDiffer>false</organismsDiffer>
    <experiments>3</experiments>
</comment>
<comment type="interaction">
    <interactant intactId="EBI-7043337">
        <id>P05813</id>
    </interactant>
    <interactant intactId="EBI-1759806">
        <id>O75593</id>
        <label>FOXH1</label>
    </interactant>
    <organismsDiffer>false</organismsDiffer>
    <experiments>3</experiments>
</comment>
<comment type="interaction">
    <interactant intactId="EBI-7043337">
        <id>P05813</id>
    </interactant>
    <interactant intactId="EBI-1752118">
        <id>P31273</id>
        <label>HOXC8</label>
    </interactant>
    <organismsDiffer>false</organismsDiffer>
    <experiments>3</experiments>
</comment>
<comment type="interaction">
    <interactant intactId="EBI-7043337">
        <id>P05813</id>
    </interactant>
    <interactant intactId="EBI-1052037">
        <id>Q8IUC1</id>
        <label>KRTAP11-1</label>
    </interactant>
    <organismsDiffer>false</organismsDiffer>
    <experiments>3</experiments>
</comment>
<comment type="interaction">
    <interactant intactId="EBI-7043337">
        <id>P05813</id>
    </interactant>
    <interactant intactId="EBI-11953846">
        <id>Q52LG2</id>
        <label>KRTAP13-2</label>
    </interactant>
    <organismsDiffer>false</organismsDiffer>
    <experiments>3</experiments>
</comment>
<comment type="interaction">
    <interactant intactId="EBI-7043337">
        <id>P05813</id>
    </interactant>
    <interactant intactId="EBI-10241252">
        <id>Q3SY46</id>
        <label>KRTAP13-3</label>
    </interactant>
    <organismsDiffer>false</organismsDiffer>
    <experiments>3</experiments>
</comment>
<comment type="interaction">
    <interactant intactId="EBI-7043337">
        <id>P05813</id>
    </interactant>
    <interactant intactId="EBI-9088686">
        <id>Q14847-2</id>
        <label>LASP1</label>
    </interactant>
    <organismsDiffer>false</organismsDiffer>
    <experiments>3</experiments>
</comment>
<comment type="interaction">
    <interactant intactId="EBI-7043337">
        <id>P05813</id>
    </interactant>
    <interactant intactId="EBI-12025760">
        <id>Q86UR1-2</id>
        <label>NOXA1</label>
    </interactant>
    <organismsDiffer>false</organismsDiffer>
    <experiments>3</experiments>
</comment>
<comment type="interaction">
    <interactant intactId="EBI-7043337">
        <id>P05813</id>
    </interactant>
    <interactant intactId="EBI-742388">
        <id>Q9H8W4</id>
        <label>PLEKHF2</label>
    </interactant>
    <organismsDiffer>false</organismsDiffer>
    <experiments>3</experiments>
</comment>
<comment type="interaction">
    <interactant intactId="EBI-7043337">
        <id>P05813</id>
    </interactant>
    <interactant intactId="EBI-9027467">
        <id>O75360</id>
        <label>PROP1</label>
    </interactant>
    <organismsDiffer>false</organismsDiffer>
    <experiments>3</experiments>
</comment>
<comment type="interaction">
    <interactant intactId="EBI-7043337">
        <id>P05813</id>
    </interactant>
    <interactant intactId="EBI-740322">
        <id>Q93062</id>
        <label>RBPMS</label>
    </interactant>
    <organismsDiffer>false</organismsDiffer>
    <experiments>3</experiments>
</comment>
<comment type="interaction">
    <interactant intactId="EBI-7043337">
        <id>P05813</id>
    </interactant>
    <interactant intactId="EBI-372094">
        <id>Q9BQY4</id>
        <label>RHOXF2</label>
    </interactant>
    <organismsDiffer>false</organismsDiffer>
    <experiments>3</experiments>
</comment>
<comment type="interaction">
    <interactant intactId="EBI-7043337">
        <id>P05813</id>
    </interactant>
    <interactant intactId="EBI-2107455">
        <id>Q08AM6</id>
        <label>VAC14</label>
    </interactant>
    <organismsDiffer>false</organismsDiffer>
    <experiments>3</experiments>
</comment>
<comment type="alternative products">
    <event type="alternative initiation"/>
    <isoform>
        <id>P05813-1</id>
        <name>A3</name>
        <sequence type="displayed"/>
    </isoform>
    <isoform>
        <id>P05813-2</id>
        <name>A1</name>
        <sequence type="described" ref="VSP_018710"/>
    </isoform>
</comment>
<comment type="domain">
    <text>Has a two-domain beta-structure, folded into four very similar Greek key motifs.</text>
</comment>
<comment type="PTM">
    <text evidence="5">Specific cleavages in the N-terminal arm occur during lens maturation and give rise to several truncated forms. Cleavages do not seem to have adverse effects on solubility.</text>
</comment>
<comment type="PTM">
    <text evidence="5">S-methylation and glutathionylation occur in normal young lenses and do not seem to be detrimental.</text>
</comment>
<comment type="mass spectrometry">
    <molecule>Beta-crystallin A3</molecule>
</comment>
<comment type="mass spectrometry">
    <molecule>Beta-crystallin A3</molecule>
</comment>
<comment type="mass spectrometry">
    <molecule>Beta-crystallin A3, isoform A1, Delta4 form</molecule>
</comment>
<comment type="mass spectrometry">
    <molecule>Beta-crystallin A3, isoform A1, Delta7 form</molecule>
</comment>
<comment type="mass spectrometry">
    <molecule>Beta-crystallin A3, isoform A1, Delta8 form</molecule>
</comment>
<comment type="disease" evidence="4 6 8 10">
    <disease id="DI-01423">
        <name>Cataract 10, multiple types</name>
        <acronym>CTRCT10</acronym>
        <description>An opacification of the crystalline lens of the eye that frequently results in visual impairment or blindness. Opacities vary in morphology, are often confined to a portion of the lens, and may be static or progressive. CTRCT10 includes congenital zonular with sutural opacities, among others. This is a form of zonular cataract with an erect Y-shaped anterior and an inverted Y-shaped posterior sutural opacities. Zonular or lamellar cataracts are opacities, broad or narrow, usually consisting of powdery white dots affecting only certain layers or zones between the cortex and nucleus of an otherwise clear lens. The opacity may be so dense as to render the entire central region of the lens completely opaque, or so translucent that vision is hardly if at all impeded. Zonular cataracts generally do not involve the embryonic nucleus, though sometimes they involve the fetal nucleus. Usually sharply separated from a clear cortex outside them, they may have projections from their outer edges known as riders or spokes.</description>
        <dbReference type="MIM" id="600881"/>
    </disease>
    <text>The disease is caused by variants affecting the gene represented in this entry.</text>
</comment>
<comment type="similarity">
    <text evidence="11">Belongs to the beta/gamma-crystallin family.</text>
</comment>
<comment type="online information" name="Eye disease Crystallin, beta-A1 (CRYBA1)">
    <link uri="https://databases.lovd.nl/shared/genes/CRYBA1"/>
    <text>Leiden Open Variation Database (LOVD)</text>
</comment>
<name>CRBA1_HUMAN</name>
<proteinExistence type="evidence at protein level"/>
<reference key="1">
    <citation type="journal article" date="1986" name="J. Biol. Chem.">
        <title>Characterization of the human beta-crystallin gene Hu beta A3/A1 reveals ancestral relationships among the beta gamma-crystallin superfamily.</title>
        <authorList>
            <person name="Hogg D."/>
            <person name="Tsui L.-C."/>
            <person name="Gorin M."/>
            <person name="Breitman M.L."/>
        </authorList>
    </citation>
    <scope>NUCLEOTIDE SEQUENCE [GENOMIC DNA]</scope>
</reference>
<reference key="2">
    <citation type="journal article" date="2004" name="Genome Res.">
        <title>The status, quality, and expansion of the NIH full-length cDNA project: the Mammalian Gene Collection (MGC).</title>
        <authorList>
            <consortium name="The MGC Project Team"/>
        </authorList>
    </citation>
    <scope>NUCLEOTIDE SEQUENCE [LARGE SCALE MRNA]</scope>
</reference>
<reference key="3">
    <citation type="journal article" date="1997" name="J. Biol. Chem.">
        <title>Sequence analysis of betaA3, betaB3, and betaA4 crystallins completes the identification of the major proteins in young human lens.</title>
        <authorList>
            <person name="Lampi K.J."/>
            <person name="Ma Z."/>
            <person name="Shih M."/>
            <person name="Shearer T.R."/>
            <person name="Smith J.B."/>
            <person name="Smith D.L."/>
            <person name="David L.L."/>
        </authorList>
    </citation>
    <scope>NUCLEOTIDE SEQUENCE [MRNA] OF 44-215</scope>
    <scope>PROTEIN SEQUENCE OF 23-30 AND 197-211</scope>
    <scope>ACETYLATION AT MET-1</scope>
    <scope>CLEAVAGE OF INITIATOR METHIONINE (ISOFORM A1)</scope>
    <scope>ACETYLATION AT ALA-2 (ISOFORM A1)</scope>
    <scope>MASS SPECTROMETRY</scope>
</reference>
<reference key="4">
    <citation type="journal article" date="2005" name="Protein Sci.">
        <title>Modifications of human betaA1/betaA3-crystallins include S-methylation, glutathiolation, and truncation.</title>
        <authorList>
            <person name="Lapko V.N."/>
            <person name="Cerny R.L."/>
            <person name="Smith D.L."/>
            <person name="Smith J.B."/>
        </authorList>
    </citation>
    <scope>PROTEOLYTIC PROCESSING OF N-TERMINUS</scope>
    <scope>ACETYLATION AT MET-1</scope>
    <scope>CLEAVAGE OF INITIATOR METHIONINE (ISOFORM A1)</scope>
    <scope>ACETYLATION AT ALA-2 (ISOFORM A1)</scope>
    <scope>METHYLATION AT CYS-82; CYS-117 AND CYS-185</scope>
    <scope>GLUTATHIONYLATION AT CYS-82 AND CYS-117</scope>
    <scope>MASS SPECTROMETRY</scope>
</reference>
<reference key="5">
    <citation type="journal article" date="2017" name="Aging Cell">
        <title>The amino acid transporter SLC36A4 regulates the amino acid pool in retinal pigmented epithelial cells and mediates the mechanistic target of rapamycin, complex 1 signaling.</title>
        <authorList>
            <person name="Shang P."/>
            <person name="Valapala M."/>
            <person name="Grebe R."/>
            <person name="Hose S."/>
            <person name="Ghosh S."/>
            <person name="Bhutto I.A."/>
            <person name="Handa J.T."/>
            <person name="Lutty G.A."/>
            <person name="Lu L."/>
            <person name="Wan J."/>
            <person name="Qian J."/>
            <person name="Sergeev Y."/>
            <person name="Puertollano R."/>
            <person name="Zigler J.S. Jr."/>
            <person name="Xu G.T."/>
            <person name="Sinha D."/>
        </authorList>
    </citation>
    <scope>INTERACTION WITH SLC36A4</scope>
</reference>
<reference key="6">
    <citation type="journal article" date="1998" name="Mol. Vis.">
        <title>Autosomal dominant zonular cataract with sutural opacities is associated with a splice mutation in the betaA3/A1-crystallin gene.</title>
        <authorList>
            <person name="Kannabiran C."/>
            <person name="Rogan P.K."/>
            <person name="Olmos L."/>
            <person name="Basti S."/>
            <person name="Rao G.N."/>
            <person name="Kaiser-Kupfer M."/>
            <person name="Hejtmancik J.F."/>
        </authorList>
    </citation>
    <scope>INVOLVEMENT IN CTRCT10</scope>
</reference>
<reference key="7">
    <citation type="journal article" date="2004" name="Hum. Mol. Genet.">
        <title>Characterization of the G91del CRYBA1/3-crystallin protein: a cause of human inherited cataract.</title>
        <authorList>
            <person name="Reddy M.A."/>
            <person name="Bateman O.A."/>
            <person name="Chakarova C."/>
            <person name="Ferris J."/>
            <person name="Berry V."/>
            <person name="Lomas E."/>
            <person name="Sarra R."/>
            <person name="Smith M.A."/>
            <person name="Moore A.T."/>
            <person name="Bhattacharya S.S."/>
            <person name="Slingsby C."/>
        </authorList>
    </citation>
    <scope>INVOLVEMENT IN CTRCT10</scope>
</reference>
<reference key="8">
    <citation type="journal article" date="2011" name="Mol. Vis.">
        <title>Mutation analysis of 12 genes in Chinese families with congenital cataracts.</title>
        <authorList>
            <person name="Sun W."/>
            <person name="Xiao X."/>
            <person name="Li S."/>
            <person name="Guo X."/>
            <person name="Zhang Q."/>
        </authorList>
    </citation>
    <scope>VARIANT CTRCT10 GLY-91 DEL</scope>
</reference>
<reference key="9">
    <citation type="journal article" date="2019" name="Mol. Vis.">
        <title>Mutation screening of crystallin genes in Chinese families with congenital cataracts.</title>
        <authorList>
            <person name="Zhuang J."/>
            <person name="Cao Z."/>
            <person name="Zhu Y."/>
            <person name="Liu L."/>
            <person name="Tong Y."/>
            <person name="Chen X."/>
            <person name="Wang Y."/>
            <person name="Lu C."/>
            <person name="Ma X."/>
            <person name="Yang J."/>
        </authorList>
    </citation>
    <scope>VARIANT CTRCT10 GLY-91 DEL</scope>
</reference>
<gene>
    <name evidence="12" type="primary">CRYBA1</name>
    <name type="synonym">CRYB1</name>
</gene>
<accession>P05813</accession>
<accession>Q13633</accession>
<accession>Q14CM9</accession>
<dbReference type="EMBL" id="M14306">
    <property type="protein sequence ID" value="AAA52107.1"/>
    <property type="molecule type" value="Genomic_DNA"/>
</dbReference>
<dbReference type="EMBL" id="M14301">
    <property type="protein sequence ID" value="AAA52107.1"/>
    <property type="status" value="JOINED"/>
    <property type="molecule type" value="Genomic_DNA"/>
</dbReference>
<dbReference type="EMBL" id="M14302">
    <property type="protein sequence ID" value="AAA52107.1"/>
    <property type="status" value="JOINED"/>
    <property type="molecule type" value="Genomic_DNA"/>
</dbReference>
<dbReference type="EMBL" id="M14303">
    <property type="protein sequence ID" value="AAA52107.1"/>
    <property type="status" value="JOINED"/>
    <property type="molecule type" value="Genomic_DNA"/>
</dbReference>
<dbReference type="EMBL" id="M14304">
    <property type="protein sequence ID" value="AAA52107.1"/>
    <property type="status" value="JOINED"/>
    <property type="molecule type" value="Genomic_DNA"/>
</dbReference>
<dbReference type="EMBL" id="M14305">
    <property type="protein sequence ID" value="AAA52107.1"/>
    <property type="status" value="JOINED"/>
    <property type="molecule type" value="Genomic_DNA"/>
</dbReference>
<dbReference type="EMBL" id="BC069537">
    <property type="protein sequence ID" value="AAH69537.1"/>
    <property type="molecule type" value="mRNA"/>
</dbReference>
<dbReference type="EMBL" id="BC113693">
    <property type="protein sequence ID" value="AAI13694.1"/>
    <property type="molecule type" value="mRNA"/>
</dbReference>
<dbReference type="EMBL" id="U59058">
    <property type="protein sequence ID" value="AAC50971.1"/>
    <property type="molecule type" value="mRNA"/>
</dbReference>
<dbReference type="CCDS" id="CCDS11249.1">
    <molecule id="P05813-1"/>
</dbReference>
<dbReference type="PIR" id="A25202">
    <property type="entry name" value="CYHUB3"/>
</dbReference>
<dbReference type="RefSeq" id="NP_005199.2">
    <molecule id="P05813-1"/>
    <property type="nucleotide sequence ID" value="NM_005208.4"/>
</dbReference>
<dbReference type="SMR" id="P05813"/>
<dbReference type="BioGRID" id="107801">
    <property type="interactions" value="41"/>
</dbReference>
<dbReference type="FunCoup" id="P05813">
    <property type="interactions" value="192"/>
</dbReference>
<dbReference type="IntAct" id="P05813">
    <property type="interactions" value="22"/>
</dbReference>
<dbReference type="MINT" id="P05813"/>
<dbReference type="STRING" id="9606.ENSP00000225387"/>
<dbReference type="GlyGen" id="P05813">
    <property type="glycosylation" value="1 site"/>
</dbReference>
<dbReference type="iPTMnet" id="P05813"/>
<dbReference type="PhosphoSitePlus" id="P05813"/>
<dbReference type="BioMuta" id="CRYBA1"/>
<dbReference type="DMDM" id="2506317"/>
<dbReference type="MassIVE" id="P05813"/>
<dbReference type="PaxDb" id="9606-ENSP00000225387"/>
<dbReference type="PeptideAtlas" id="P05813"/>
<dbReference type="ProteomicsDB" id="51859">
    <molecule id="P05813-1"/>
</dbReference>
<dbReference type="ProteomicsDB" id="51860">
    <molecule id="P05813-2"/>
</dbReference>
<dbReference type="Antibodypedia" id="26701">
    <property type="antibodies" value="177 antibodies from 25 providers"/>
</dbReference>
<dbReference type="DNASU" id="1411"/>
<dbReference type="Ensembl" id="ENST00000225387.8">
    <molecule id="P05813-1"/>
    <property type="protein sequence ID" value="ENSP00000225387.3"/>
    <property type="gene ID" value="ENSG00000108255.8"/>
</dbReference>
<dbReference type="GeneID" id="1411"/>
<dbReference type="KEGG" id="hsa:1411"/>
<dbReference type="MANE-Select" id="ENST00000225387.8">
    <property type="protein sequence ID" value="ENSP00000225387.3"/>
    <property type="RefSeq nucleotide sequence ID" value="NM_005208.5"/>
    <property type="RefSeq protein sequence ID" value="NP_005199.2"/>
</dbReference>
<dbReference type="UCSC" id="uc002hdw.4">
    <molecule id="P05813-1"/>
    <property type="organism name" value="human"/>
</dbReference>
<dbReference type="AGR" id="HGNC:2394"/>
<dbReference type="CTD" id="1411"/>
<dbReference type="DisGeNET" id="1411"/>
<dbReference type="GeneCards" id="CRYBA1"/>
<dbReference type="HGNC" id="HGNC:2394">
    <property type="gene designation" value="CRYBA1"/>
</dbReference>
<dbReference type="HPA" id="ENSG00000108255">
    <property type="expression patterns" value="Not detected"/>
</dbReference>
<dbReference type="MalaCards" id="CRYBA1"/>
<dbReference type="MIM" id="123610">
    <property type="type" value="gene"/>
</dbReference>
<dbReference type="MIM" id="600881">
    <property type="type" value="phenotype"/>
</dbReference>
<dbReference type="neXtProt" id="NX_P05813"/>
<dbReference type="OpenTargets" id="ENSG00000108255"/>
<dbReference type="Orphanet" id="441452">
    <property type="disease" value="Early-onset lamellar cataract"/>
</dbReference>
<dbReference type="Orphanet" id="98991">
    <property type="disease" value="Early-onset nuclear cataract"/>
</dbReference>
<dbReference type="Orphanet" id="98993">
    <property type="disease" value="Early-onset posterior polar cataract"/>
</dbReference>
<dbReference type="Orphanet" id="98985">
    <property type="disease" value="Early-onset sutural cataract"/>
</dbReference>
<dbReference type="PharmGKB" id="PA26908"/>
<dbReference type="VEuPathDB" id="HostDB:ENSG00000108255"/>
<dbReference type="eggNOG" id="ENOG502QSM0">
    <property type="taxonomic scope" value="Eukaryota"/>
</dbReference>
<dbReference type="GeneTree" id="ENSGT00940000159685"/>
<dbReference type="HOGENOM" id="CLU_081883_0_0_1"/>
<dbReference type="InParanoid" id="P05813"/>
<dbReference type="OMA" id="IGRQWEM"/>
<dbReference type="OrthoDB" id="8688215at2759"/>
<dbReference type="PAN-GO" id="P05813">
    <property type="GO annotations" value="3 GO annotations based on evolutionary models"/>
</dbReference>
<dbReference type="PhylomeDB" id="P05813"/>
<dbReference type="TreeFam" id="TF331401"/>
<dbReference type="PathwayCommons" id="P05813"/>
<dbReference type="SignaLink" id="P05813"/>
<dbReference type="BioGRID-ORCS" id="1411">
    <property type="hits" value="12 hits in 1149 CRISPR screens"/>
</dbReference>
<dbReference type="ChiTaRS" id="CRYBA1">
    <property type="organism name" value="human"/>
</dbReference>
<dbReference type="GeneWiki" id="Crystallin,_beta_A1"/>
<dbReference type="GenomeRNAi" id="1411"/>
<dbReference type="Pharos" id="P05813">
    <property type="development level" value="Tbio"/>
</dbReference>
<dbReference type="PRO" id="PR:P05813"/>
<dbReference type="Proteomes" id="UP000005640">
    <property type="component" value="Chromosome 17"/>
</dbReference>
<dbReference type="RNAct" id="P05813">
    <property type="molecule type" value="protein"/>
</dbReference>
<dbReference type="Bgee" id="ENSG00000108255">
    <property type="expression patterns" value="Expressed in lens of camera-type eye and 102 other cell types or tissues"/>
</dbReference>
<dbReference type="ExpressionAtlas" id="P05813">
    <property type="expression patterns" value="baseline and differential"/>
</dbReference>
<dbReference type="GO" id="GO:0005212">
    <property type="term" value="F:structural constituent of eye lens"/>
    <property type="evidence" value="ECO:0000318"/>
    <property type="project" value="GO_Central"/>
</dbReference>
<dbReference type="GO" id="GO:0002088">
    <property type="term" value="P:lens development in camera-type eye"/>
    <property type="evidence" value="ECO:0000318"/>
    <property type="project" value="GO_Central"/>
</dbReference>
<dbReference type="GO" id="GO:0001818">
    <property type="term" value="P:negative regulation of cytokine production"/>
    <property type="evidence" value="ECO:0007669"/>
    <property type="project" value="Ensembl"/>
</dbReference>
<dbReference type="GO" id="GO:0070373">
    <property type="term" value="P:negative regulation of ERK1 and ERK2 cascade"/>
    <property type="evidence" value="ECO:0007669"/>
    <property type="project" value="Ensembl"/>
</dbReference>
<dbReference type="GO" id="GO:0051898">
    <property type="term" value="P:negative regulation of phosphatidylinositol 3-kinase/protein kinase B signal transduction"/>
    <property type="evidence" value="ECO:0007669"/>
    <property type="project" value="Ensembl"/>
</dbReference>
<dbReference type="GO" id="GO:0032007">
    <property type="term" value="P:negative regulation of TOR signaling"/>
    <property type="evidence" value="ECO:0007669"/>
    <property type="project" value="Ensembl"/>
</dbReference>
<dbReference type="GO" id="GO:0006909">
    <property type="term" value="P:phagocytosis"/>
    <property type="evidence" value="ECO:0007669"/>
    <property type="project" value="Ensembl"/>
</dbReference>
<dbReference type="GO" id="GO:2000210">
    <property type="term" value="P:positive regulation of anoikis"/>
    <property type="evidence" value="ECO:0007669"/>
    <property type="project" value="Ensembl"/>
</dbReference>
<dbReference type="GO" id="GO:0010506">
    <property type="term" value="P:regulation of autophagy"/>
    <property type="evidence" value="ECO:0007669"/>
    <property type="project" value="Ensembl"/>
</dbReference>
<dbReference type="GO" id="GO:0007601">
    <property type="term" value="P:visual perception"/>
    <property type="evidence" value="ECO:0000318"/>
    <property type="project" value="GO_Central"/>
</dbReference>
<dbReference type="FunFam" id="2.60.20.10:FF:000004">
    <property type="entry name" value="Crystallin beta A4"/>
    <property type="match status" value="1"/>
</dbReference>
<dbReference type="FunFam" id="2.60.20.10:FF:000002">
    <property type="entry name" value="Crystallin, beta B2"/>
    <property type="match status" value="1"/>
</dbReference>
<dbReference type="Gene3D" id="2.60.20.10">
    <property type="entry name" value="Crystallins"/>
    <property type="match status" value="2"/>
</dbReference>
<dbReference type="InterPro" id="IPR050252">
    <property type="entry name" value="Beta/Gamma-Crystallin"/>
</dbReference>
<dbReference type="InterPro" id="IPR001064">
    <property type="entry name" value="Beta/gamma_crystallin"/>
</dbReference>
<dbReference type="InterPro" id="IPR011024">
    <property type="entry name" value="G_crystallin-like"/>
</dbReference>
<dbReference type="PANTHER" id="PTHR11818:SF8">
    <property type="entry name" value="BETA-CRYSTALLIN A3"/>
    <property type="match status" value="1"/>
</dbReference>
<dbReference type="PANTHER" id="PTHR11818">
    <property type="entry name" value="BETA/GAMMA CRYSTALLIN"/>
    <property type="match status" value="1"/>
</dbReference>
<dbReference type="Pfam" id="PF00030">
    <property type="entry name" value="Crystall"/>
    <property type="match status" value="2"/>
</dbReference>
<dbReference type="PRINTS" id="PR01367">
    <property type="entry name" value="BGCRYSTALLIN"/>
</dbReference>
<dbReference type="SMART" id="SM00247">
    <property type="entry name" value="XTALbg"/>
    <property type="match status" value="2"/>
</dbReference>
<dbReference type="SUPFAM" id="SSF49695">
    <property type="entry name" value="gamma-Crystallin-like"/>
    <property type="match status" value="1"/>
</dbReference>
<dbReference type="PROSITE" id="PS50915">
    <property type="entry name" value="CRYSTALLIN_BETA_GAMMA"/>
    <property type="match status" value="4"/>
</dbReference>
<evidence type="ECO:0000250" key="1"/>
<evidence type="ECO:0000255" key="2">
    <source>
        <dbReference type="PROSITE-ProRule" id="PRU00028"/>
    </source>
</evidence>
<evidence type="ECO:0000256" key="3">
    <source>
        <dbReference type="SAM" id="MobiDB-lite"/>
    </source>
</evidence>
<evidence type="ECO:0000269" key="4">
    <source>
    </source>
</evidence>
<evidence type="ECO:0000269" key="5">
    <source>
    </source>
</evidence>
<evidence type="ECO:0000269" key="6">
    <source>
    </source>
</evidence>
<evidence type="ECO:0000269" key="7">
    <source>
    </source>
</evidence>
<evidence type="ECO:0000269" key="8">
    <source>
    </source>
</evidence>
<evidence type="ECO:0000269" key="9">
    <source>
    </source>
</evidence>
<evidence type="ECO:0000269" key="10">
    <source>
    </source>
</evidence>
<evidence type="ECO:0000305" key="11"/>
<evidence type="ECO:0000312" key="12">
    <source>
        <dbReference type="HGNC" id="HGNC:2394"/>
    </source>
</evidence>